<accession>A0A348DU52</accession>
<comment type="function">
    <text evidence="6">Bifunctional terpene synthase converts dimethylallyl diphosphate (DMAPP) and isopentenyl diphosphate (IPP) into a cyclopiane-type diterpene (PubMed:30179018). The C-terminal prenyltransferase (PT) domain of PcCS catalyzes formation of geranylgeranyl pyrophosphate (GGPP), whereas the N-terminal terpene cyclase (TC) domain catalyzes the cyclization of GGPP to the cyclopiane-type diterpene penichrysol (PubMed:30179018).</text>
</comment>
<comment type="catalytic activity">
    <reaction evidence="6">
        <text>isopentenyl diphosphate + (2E,6E)-farnesyl diphosphate = (2E,6E,10E)-geranylgeranyl diphosphate + diphosphate</text>
        <dbReference type="Rhea" id="RHEA:17653"/>
        <dbReference type="ChEBI" id="CHEBI:33019"/>
        <dbReference type="ChEBI" id="CHEBI:58756"/>
        <dbReference type="ChEBI" id="CHEBI:128769"/>
        <dbReference type="ChEBI" id="CHEBI:175763"/>
        <dbReference type="EC" id="2.5.1.29"/>
    </reaction>
    <physiologicalReaction direction="left-to-right" evidence="6">
        <dbReference type="Rhea" id="RHEA:17654"/>
    </physiologicalReaction>
</comment>
<comment type="catalytic activity">
    <reaction evidence="6">
        <text>(2E,6E,10E)-geranylgeranyl diphosphate + H2O = (+)-penichrysol + diphosphate</text>
        <dbReference type="Rhea" id="RHEA:78403"/>
        <dbReference type="ChEBI" id="CHEBI:15377"/>
        <dbReference type="ChEBI" id="CHEBI:33019"/>
        <dbReference type="ChEBI" id="CHEBI:58756"/>
        <dbReference type="ChEBI" id="CHEBI:177897"/>
    </reaction>
    <physiologicalReaction direction="left-to-right" evidence="6">
        <dbReference type="Rhea" id="RHEA:78404"/>
    </physiologicalReaction>
</comment>
<comment type="cofactor">
    <cofactor evidence="2">
        <name>Mg(2+)</name>
        <dbReference type="ChEBI" id="CHEBI:18420"/>
    </cofactor>
</comment>
<comment type="pathway">
    <text evidence="6">Secondary metabolite biosynthesis; terpenoid biosynthesis.</text>
</comment>
<comment type="subunit">
    <text evidence="1">Hexamer.</text>
</comment>
<comment type="domain">
    <text evidence="9">The conserved DDXXD motifs as well as the NSE/DTE motif are important for the catalytic activity, presumably through binding to Mg(2+).</text>
</comment>
<comment type="similarity">
    <text evidence="8">In the N-terminal section; belongs to the terpene synthase family.</text>
</comment>
<comment type="similarity">
    <text evidence="8">In the C-terminal section; belongs to the FPP/GGPP synthase family.</text>
</comment>
<proteinExistence type="evidence at protein level"/>
<name>PCCS_PENCH</name>
<protein>
    <recommendedName>
        <fullName evidence="7">Cyclopiane-type diterpene synthase</fullName>
        <shortName evidence="7">CS</shortName>
    </recommendedName>
    <domain>
        <recommendedName>
            <fullName evidence="7">Terpene cyclase</fullName>
            <ecNumber evidence="6">4.2.3.-</ecNumber>
        </recommendedName>
    </domain>
    <domain>
        <recommendedName>
            <fullName evidence="7">Geranylgeranyl diphosphate synthase</fullName>
            <shortName evidence="7">GGDP synthase</shortName>
            <shortName evidence="7">GGS</shortName>
            <ecNumber evidence="6">2.5.1.29</ecNumber>
        </recommendedName>
    </domain>
</protein>
<keyword id="KW-0414">Isoprene biosynthesis</keyword>
<keyword id="KW-0456">Lyase</keyword>
<keyword id="KW-0460">Magnesium</keyword>
<keyword id="KW-0479">Metal-binding</keyword>
<keyword id="KW-0511">Multifunctional enzyme</keyword>
<keyword id="KW-0677">Repeat</keyword>
<keyword id="KW-0808">Transferase</keyword>
<dbReference type="EC" id="4.2.3.-" evidence="6"/>
<dbReference type="EC" id="2.5.1.29" evidence="6"/>
<dbReference type="EMBL" id="LC411963">
    <property type="protein sequence ID" value="BBF45518.1"/>
    <property type="molecule type" value="Genomic_DNA"/>
</dbReference>
<dbReference type="SMR" id="A0A348DU52"/>
<dbReference type="UniPathway" id="UPA00213"/>
<dbReference type="GO" id="GO:0016829">
    <property type="term" value="F:lyase activity"/>
    <property type="evidence" value="ECO:0007669"/>
    <property type="project" value="UniProtKB-KW"/>
</dbReference>
<dbReference type="GO" id="GO:0046872">
    <property type="term" value="F:metal ion binding"/>
    <property type="evidence" value="ECO:0007669"/>
    <property type="project" value="UniProtKB-KW"/>
</dbReference>
<dbReference type="GO" id="GO:0004659">
    <property type="term" value="F:prenyltransferase activity"/>
    <property type="evidence" value="ECO:0007669"/>
    <property type="project" value="InterPro"/>
</dbReference>
<dbReference type="GO" id="GO:0046165">
    <property type="term" value="P:alcohol biosynthetic process"/>
    <property type="evidence" value="ECO:0007669"/>
    <property type="project" value="UniProtKB-ARBA"/>
</dbReference>
<dbReference type="GO" id="GO:0043386">
    <property type="term" value="P:mycotoxin biosynthetic process"/>
    <property type="evidence" value="ECO:0007669"/>
    <property type="project" value="UniProtKB-ARBA"/>
</dbReference>
<dbReference type="GO" id="GO:0016114">
    <property type="term" value="P:terpenoid biosynthetic process"/>
    <property type="evidence" value="ECO:0007669"/>
    <property type="project" value="UniProtKB-UniPathway"/>
</dbReference>
<dbReference type="Gene3D" id="1.10.600.10">
    <property type="entry name" value="Farnesyl Diphosphate Synthase"/>
    <property type="match status" value="2"/>
</dbReference>
<dbReference type="InterPro" id="IPR008949">
    <property type="entry name" value="Isoprenoid_synthase_dom_sf"/>
</dbReference>
<dbReference type="InterPro" id="IPR000092">
    <property type="entry name" value="Polyprenyl_synt"/>
</dbReference>
<dbReference type="InterPro" id="IPR033749">
    <property type="entry name" value="Polyprenyl_synt_CS"/>
</dbReference>
<dbReference type="PANTHER" id="PTHR12001">
    <property type="entry name" value="GERANYLGERANYL PYROPHOSPHATE SYNTHASE"/>
    <property type="match status" value="1"/>
</dbReference>
<dbReference type="PANTHER" id="PTHR12001:SF44">
    <property type="entry name" value="GERANYLGERANYL PYROPHOSPHATE SYNTHASE"/>
    <property type="match status" value="1"/>
</dbReference>
<dbReference type="Pfam" id="PF00348">
    <property type="entry name" value="polyprenyl_synt"/>
    <property type="match status" value="1"/>
</dbReference>
<dbReference type="Pfam" id="PF19086">
    <property type="entry name" value="Terpene_syn_C_2"/>
    <property type="match status" value="1"/>
</dbReference>
<dbReference type="SUPFAM" id="SSF48576">
    <property type="entry name" value="Terpenoid synthases"/>
    <property type="match status" value="2"/>
</dbReference>
<dbReference type="PROSITE" id="PS00723">
    <property type="entry name" value="POLYPRENYL_SYNTHASE_1"/>
    <property type="match status" value="1"/>
</dbReference>
<dbReference type="PROSITE" id="PS00444">
    <property type="entry name" value="POLYPRENYL_SYNTHASE_2"/>
    <property type="match status" value="1"/>
</dbReference>
<feature type="chain" id="PRO_0000453638" description="Cyclopiane-type diterpene synthase">
    <location>
        <begin position="1"/>
        <end position="770"/>
    </location>
</feature>
<feature type="region of interest" description="Terpene cyclase" evidence="9">
    <location>
        <begin position="5"/>
        <end position="335"/>
    </location>
</feature>
<feature type="region of interest" description="Prenyltransferase" evidence="9">
    <location>
        <begin position="336"/>
        <end position="720"/>
    </location>
</feature>
<feature type="region of interest" description="Disordered" evidence="5">
    <location>
        <begin position="371"/>
        <end position="397"/>
    </location>
</feature>
<feature type="short sequence motif" description="DDXXD 1" evidence="9">
    <location>
        <begin position="97"/>
        <end position="101"/>
    </location>
</feature>
<feature type="short sequence motif" description="NSE/DTE" evidence="9">
    <location>
        <begin position="234"/>
        <end position="242"/>
    </location>
</feature>
<feature type="short sequence motif" description="DDXXD 2" evidence="9">
    <location>
        <begin position="462"/>
        <end position="466"/>
    </location>
</feature>
<feature type="compositionally biased region" description="Polar residues" evidence="5">
    <location>
        <begin position="374"/>
        <end position="383"/>
    </location>
</feature>
<feature type="binding site" evidence="4">
    <location>
        <position position="97"/>
    </location>
    <ligand>
        <name>Mg(2+)</name>
        <dbReference type="ChEBI" id="CHEBI:18420"/>
        <label>1</label>
    </ligand>
</feature>
<feature type="binding site" evidence="4">
    <location>
        <position position="97"/>
    </location>
    <ligand>
        <name>Mg(2+)</name>
        <dbReference type="ChEBI" id="CHEBI:18420"/>
        <label>2</label>
    </ligand>
</feature>
<feature type="binding site" evidence="1">
    <location>
        <position position="97"/>
    </location>
    <ligand>
        <name>substrate</name>
    </ligand>
</feature>
<feature type="binding site" evidence="4">
    <location>
        <position position="101"/>
    </location>
    <ligand>
        <name>Mg(2+)</name>
        <dbReference type="ChEBI" id="CHEBI:18420"/>
        <label>1</label>
    </ligand>
</feature>
<feature type="binding site" evidence="4">
    <location>
        <position position="101"/>
    </location>
    <ligand>
        <name>Mg(2+)</name>
        <dbReference type="ChEBI" id="CHEBI:18420"/>
        <label>2</label>
    </ligand>
</feature>
<feature type="binding site" evidence="1">
    <location>
        <position position="101"/>
    </location>
    <ligand>
        <name>substrate</name>
    </ligand>
</feature>
<feature type="binding site" evidence="1">
    <location>
        <begin position="190"/>
        <end position="193"/>
    </location>
    <ligand>
        <name>substrate</name>
    </ligand>
</feature>
<feature type="binding site" evidence="1">
    <location>
        <position position="234"/>
    </location>
    <ligand>
        <name>substrate</name>
    </ligand>
</feature>
<feature type="binding site" evidence="1">
    <location>
        <begin position="238"/>
        <end position="242"/>
    </location>
    <ligand>
        <name>substrate</name>
    </ligand>
</feature>
<feature type="binding site" evidence="1">
    <location>
        <begin position="328"/>
        <end position="329"/>
    </location>
    <ligand>
        <name>substrate</name>
    </ligand>
</feature>
<feature type="binding site" evidence="3">
    <location>
        <position position="423"/>
    </location>
    <ligand>
        <name>isopentenyl diphosphate</name>
        <dbReference type="ChEBI" id="CHEBI:128769"/>
    </ligand>
</feature>
<feature type="binding site" evidence="3">
    <location>
        <position position="426"/>
    </location>
    <ligand>
        <name>isopentenyl diphosphate</name>
        <dbReference type="ChEBI" id="CHEBI:128769"/>
    </ligand>
</feature>
<feature type="binding site" evidence="3">
    <location>
        <position position="455"/>
    </location>
    <ligand>
        <name>isopentenyl diphosphate</name>
        <dbReference type="ChEBI" id="CHEBI:128769"/>
    </ligand>
</feature>
<feature type="binding site" evidence="3">
    <location>
        <position position="462"/>
    </location>
    <ligand>
        <name>Mg(2+)</name>
        <dbReference type="ChEBI" id="CHEBI:18420"/>
        <label>3</label>
    </ligand>
</feature>
<feature type="binding site" evidence="3">
    <location>
        <position position="462"/>
    </location>
    <ligand>
        <name>Mg(2+)</name>
        <dbReference type="ChEBI" id="CHEBI:18420"/>
        <label>4</label>
    </ligand>
</feature>
<feature type="binding site" evidence="3">
    <location>
        <position position="466"/>
    </location>
    <ligand>
        <name>Mg(2+)</name>
        <dbReference type="ChEBI" id="CHEBI:18420"/>
        <label>3</label>
    </ligand>
</feature>
<feature type="binding site" evidence="3">
    <location>
        <position position="466"/>
    </location>
    <ligand>
        <name>Mg(2+)</name>
        <dbReference type="ChEBI" id="CHEBI:18420"/>
        <label>4</label>
    </ligand>
</feature>
<feature type="binding site" evidence="3">
    <location>
        <position position="471"/>
    </location>
    <ligand>
        <name>dimethylallyl diphosphate</name>
        <dbReference type="ChEBI" id="CHEBI:57623"/>
    </ligand>
</feature>
<feature type="binding site" evidence="3">
    <location>
        <position position="472"/>
    </location>
    <ligand>
        <name>isopentenyl diphosphate</name>
        <dbReference type="ChEBI" id="CHEBI:128769"/>
    </ligand>
</feature>
<feature type="binding site" evidence="3">
    <location>
        <position position="548"/>
    </location>
    <ligand>
        <name>dimethylallyl diphosphate</name>
        <dbReference type="ChEBI" id="CHEBI:57623"/>
    </ligand>
</feature>
<feature type="binding site" evidence="3">
    <location>
        <position position="549"/>
    </location>
    <ligand>
        <name>dimethylallyl diphosphate</name>
        <dbReference type="ChEBI" id="CHEBI:57623"/>
    </ligand>
</feature>
<feature type="binding site" evidence="3">
    <location>
        <position position="584"/>
    </location>
    <ligand>
        <name>dimethylallyl diphosphate</name>
        <dbReference type="ChEBI" id="CHEBI:57623"/>
    </ligand>
</feature>
<feature type="binding site" evidence="3">
    <location>
        <position position="591"/>
    </location>
    <ligand>
        <name>dimethylallyl diphosphate</name>
        <dbReference type="ChEBI" id="CHEBI:57623"/>
    </ligand>
</feature>
<feature type="binding site" evidence="3">
    <location>
        <position position="620"/>
    </location>
    <ligand>
        <name>dimethylallyl diphosphate</name>
        <dbReference type="ChEBI" id="CHEBI:57623"/>
    </ligand>
</feature>
<feature type="binding site" evidence="3">
    <location>
        <position position="630"/>
    </location>
    <ligand>
        <name>dimethylallyl diphosphate</name>
        <dbReference type="ChEBI" id="CHEBI:57623"/>
    </ligand>
</feature>
<organism>
    <name type="scientific">Penicillium chrysogenum</name>
    <name type="common">Penicillium notatum</name>
    <dbReference type="NCBI Taxonomy" id="5076"/>
    <lineage>
        <taxon>Eukaryota</taxon>
        <taxon>Fungi</taxon>
        <taxon>Dikarya</taxon>
        <taxon>Ascomycota</taxon>
        <taxon>Pezizomycotina</taxon>
        <taxon>Eurotiomycetes</taxon>
        <taxon>Eurotiomycetidae</taxon>
        <taxon>Eurotiales</taxon>
        <taxon>Aspergillaceae</taxon>
        <taxon>Penicillium</taxon>
        <taxon>Penicillium chrysogenum species complex</taxon>
    </lineage>
</organism>
<gene>
    <name evidence="7" type="primary">PcCS</name>
</gene>
<evidence type="ECO:0000250" key="1">
    <source>
        <dbReference type="UniProtKB" id="A2PZA5"/>
    </source>
</evidence>
<evidence type="ECO:0000250" key="2">
    <source>
        <dbReference type="UniProtKB" id="P9WEV7"/>
    </source>
</evidence>
<evidence type="ECO:0000250" key="3">
    <source>
        <dbReference type="UniProtKB" id="Q12051"/>
    </source>
</evidence>
<evidence type="ECO:0000250" key="4">
    <source>
        <dbReference type="UniProtKB" id="Q40577"/>
    </source>
</evidence>
<evidence type="ECO:0000256" key="5">
    <source>
        <dbReference type="SAM" id="MobiDB-lite"/>
    </source>
</evidence>
<evidence type="ECO:0000269" key="6">
    <source>
    </source>
</evidence>
<evidence type="ECO:0000303" key="7">
    <source>
    </source>
</evidence>
<evidence type="ECO:0000305" key="8"/>
<evidence type="ECO:0000305" key="9">
    <source>
    </source>
</evidence>
<sequence length="770" mass="87136">MADKITDEYAVGIDPEIYANNPAYSSLFNPYIHKQTIIADHVSVQCHIDLNGIDAVGSKFGNLNAHAGNFTSLCAPNCLPERFALVAYTVEYAFLHDDETDNAADQEALLLENKMLHQALNQSGMTSVSTRVSDKAQRKSEVQAKIAAEYLRLDPVFGEWFLNKWQTFTACVKDVRSLEFPSLDDYLEFRIVDAAADWTLYNFRWGSGITLTPEEEKLADPMSYVAYAELCLVNDLFSWDKEYASHIKSNGDVPLVNAVHIVAVTQGLTHCAAKAVVQAEVRAHEERFCQLKEQYEATDKPSHEVLRWLRLLEHSMAGNWVWSLCVPRYCKVDRNPYKDHLEKYGSDAVRVLTPLDRLCWSKQEIKEMKRNQLKEPSSSTYKTHFSPLEPNPGPEQTRLTISQTQQQRPVLNPYTYINSLPSKNVRQTLIAALNSWYKVPVKSLLIIEGAVNFLHNSSLLLDDIQDGSVLRRGRPVAHQIFGVGQTINTATYLMNEALYLIQMLSPSAVSAYTDEMRNLQLGQGRDLYWSYHTHVPTPAQYISMVDGKTGGLFRLISRLMRSEATKNSDLDISQFATLLGRHFQIRDDYQNLQSEDVTNPHIVSLYAPRANMLLQYTKNKGFCDDLDEGKVSFPVILSMQSPGFSNTALSSVFKGSRKGETLSLEMKQYMLEEITARGAFSETKAVLRKLHTELLSLLMETEKKAGGVENWALRLLIMKLDIVEEKKVAPPKSDSHWGVNQRRAWKGGQKNGRPIDKACFLRAMEEALQK</sequence>
<reference key="1">
    <citation type="journal article" date="2018" name="Org. Lett.">
        <title>Crystalline sponge method enabled the investigation of a prenyltransferase-terpene synthase chimeric enzyme, whose product exhibits broadened NMR Signals.</title>
        <authorList>
            <person name="Mitsuhashi T."/>
            <person name="Kikuchi T."/>
            <person name="Hoshino S."/>
            <person name="Ozeki M."/>
            <person name="Awakawa T."/>
            <person name="Shi S.P."/>
            <person name="Fujita M."/>
            <person name="Abe I."/>
        </authorList>
    </citation>
    <scope>NUCLEOTIDE SEQUENCE [GENOMIC DNA]</scope>
    <scope>FUNCTION</scope>
    <scope>DOMAIN</scope>
    <scope>CATALYTIC ACTIVITY</scope>
    <scope>PATHWAY</scope>
    <source>
        <strain>MT-12</strain>
    </source>
</reference>